<evidence type="ECO:0000255" key="1">
    <source>
        <dbReference type="HAMAP-Rule" id="MF_01629"/>
    </source>
</evidence>
<dbReference type="EC" id="1.4.3.5" evidence="1"/>
<dbReference type="EMBL" id="CP000356">
    <property type="protein sequence ID" value="ABF52375.1"/>
    <property type="molecule type" value="Genomic_DNA"/>
</dbReference>
<dbReference type="SMR" id="Q1GVE7"/>
<dbReference type="STRING" id="317655.Sala_0654"/>
<dbReference type="KEGG" id="sal:Sala_0654"/>
<dbReference type="eggNOG" id="COG0259">
    <property type="taxonomic scope" value="Bacteria"/>
</dbReference>
<dbReference type="HOGENOM" id="CLU_032263_2_3_5"/>
<dbReference type="UniPathway" id="UPA01068">
    <property type="reaction ID" value="UER00304"/>
</dbReference>
<dbReference type="UniPathway" id="UPA01068">
    <property type="reaction ID" value="UER00305"/>
</dbReference>
<dbReference type="Proteomes" id="UP000006578">
    <property type="component" value="Chromosome"/>
</dbReference>
<dbReference type="GO" id="GO:0010181">
    <property type="term" value="F:FMN binding"/>
    <property type="evidence" value="ECO:0007669"/>
    <property type="project" value="UniProtKB-UniRule"/>
</dbReference>
<dbReference type="GO" id="GO:0004733">
    <property type="term" value="F:pyridoxamine phosphate oxidase activity"/>
    <property type="evidence" value="ECO:0007669"/>
    <property type="project" value="UniProtKB-UniRule"/>
</dbReference>
<dbReference type="GO" id="GO:0008615">
    <property type="term" value="P:pyridoxine biosynthetic process"/>
    <property type="evidence" value="ECO:0007669"/>
    <property type="project" value="UniProtKB-KW"/>
</dbReference>
<dbReference type="FunFam" id="2.30.110.10:FF:000020">
    <property type="entry name" value="PNPO isoform 11"/>
    <property type="match status" value="1"/>
</dbReference>
<dbReference type="Gene3D" id="2.30.110.10">
    <property type="entry name" value="Electron Transport, Fmn-binding Protein, Chain A"/>
    <property type="match status" value="1"/>
</dbReference>
<dbReference type="HAMAP" id="MF_01629">
    <property type="entry name" value="PdxH"/>
    <property type="match status" value="1"/>
</dbReference>
<dbReference type="InterPro" id="IPR000659">
    <property type="entry name" value="Pyridox_Oxase"/>
</dbReference>
<dbReference type="InterPro" id="IPR019740">
    <property type="entry name" value="Pyridox_Oxase_CS"/>
</dbReference>
<dbReference type="InterPro" id="IPR011576">
    <property type="entry name" value="Pyridox_Oxase_N"/>
</dbReference>
<dbReference type="InterPro" id="IPR019576">
    <property type="entry name" value="Pyridoxamine_oxidase_dimer_C"/>
</dbReference>
<dbReference type="InterPro" id="IPR012349">
    <property type="entry name" value="Split_barrel_FMN-bd"/>
</dbReference>
<dbReference type="NCBIfam" id="TIGR00558">
    <property type="entry name" value="pdxH"/>
    <property type="match status" value="1"/>
</dbReference>
<dbReference type="NCBIfam" id="NF004231">
    <property type="entry name" value="PRK05679.1"/>
    <property type="match status" value="1"/>
</dbReference>
<dbReference type="PANTHER" id="PTHR10851:SF0">
    <property type="entry name" value="PYRIDOXINE-5'-PHOSPHATE OXIDASE"/>
    <property type="match status" value="1"/>
</dbReference>
<dbReference type="PANTHER" id="PTHR10851">
    <property type="entry name" value="PYRIDOXINE-5-PHOSPHATE OXIDASE"/>
    <property type="match status" value="1"/>
</dbReference>
<dbReference type="Pfam" id="PF10590">
    <property type="entry name" value="PNP_phzG_C"/>
    <property type="match status" value="1"/>
</dbReference>
<dbReference type="Pfam" id="PF01243">
    <property type="entry name" value="PNPOx_N"/>
    <property type="match status" value="1"/>
</dbReference>
<dbReference type="PIRSF" id="PIRSF000190">
    <property type="entry name" value="Pyd_amn-ph_oxd"/>
    <property type="match status" value="1"/>
</dbReference>
<dbReference type="SUPFAM" id="SSF50475">
    <property type="entry name" value="FMN-binding split barrel"/>
    <property type="match status" value="1"/>
</dbReference>
<dbReference type="PROSITE" id="PS01064">
    <property type="entry name" value="PYRIDOX_OXIDASE"/>
    <property type="match status" value="1"/>
</dbReference>
<accession>Q1GVE7</accession>
<sequence length="216" mass="24512">MRAAAVKFRTCRSTTRVPRIMTARMSDDPLALFDSWFAEARASEPNDSNAMALATATPDGRPSLRMVLLKGHGPDGFVFYTNLDSRKGGELAANPHVALLFHWKSLRRQIRIEGSVAPVDNATADAYFATRSRDSQIGAWASDQSRPLDSRATFEARFAEMQARFAGQDVPRPPRWSGWRVTPERIEFWQDRAHRLHERTLFERTAIGWTKGYLYP</sequence>
<feature type="chain" id="PRO_0000255893" description="Pyridoxine/pyridoxamine 5'-phosphate oxidase">
    <location>
        <begin position="1"/>
        <end position="216"/>
    </location>
</feature>
<feature type="binding site" evidence="1">
    <location>
        <begin position="65"/>
        <end position="70"/>
    </location>
    <ligand>
        <name>FMN</name>
        <dbReference type="ChEBI" id="CHEBI:58210"/>
    </ligand>
</feature>
<feature type="binding site" evidence="1">
    <location>
        <position position="70"/>
    </location>
    <ligand>
        <name>substrate</name>
    </ligand>
</feature>
<feature type="binding site" evidence="1">
    <location>
        <begin position="80"/>
        <end position="81"/>
    </location>
    <ligand>
        <name>FMN</name>
        <dbReference type="ChEBI" id="CHEBI:58210"/>
    </ligand>
</feature>
<feature type="binding site" evidence="1">
    <location>
        <position position="86"/>
    </location>
    <ligand>
        <name>FMN</name>
        <dbReference type="ChEBI" id="CHEBI:58210"/>
    </ligand>
</feature>
<feature type="binding site" evidence="1">
    <location>
        <position position="87"/>
    </location>
    <ligand>
        <name>FMN</name>
        <dbReference type="ChEBI" id="CHEBI:58210"/>
    </ligand>
</feature>
<feature type="binding site" evidence="1">
    <location>
        <position position="109"/>
    </location>
    <ligand>
        <name>FMN</name>
        <dbReference type="ChEBI" id="CHEBI:58210"/>
    </ligand>
</feature>
<feature type="binding site" evidence="1">
    <location>
        <position position="127"/>
    </location>
    <ligand>
        <name>substrate</name>
    </ligand>
</feature>
<feature type="binding site" evidence="1">
    <location>
        <position position="131"/>
    </location>
    <ligand>
        <name>substrate</name>
    </ligand>
</feature>
<feature type="binding site" evidence="1">
    <location>
        <position position="135"/>
    </location>
    <ligand>
        <name>substrate</name>
    </ligand>
</feature>
<feature type="binding site" evidence="1">
    <location>
        <begin position="144"/>
        <end position="145"/>
    </location>
    <ligand>
        <name>FMN</name>
        <dbReference type="ChEBI" id="CHEBI:58210"/>
    </ligand>
</feature>
<feature type="binding site" evidence="1">
    <location>
        <position position="189"/>
    </location>
    <ligand>
        <name>FMN</name>
        <dbReference type="ChEBI" id="CHEBI:58210"/>
    </ligand>
</feature>
<feature type="binding site" evidence="1">
    <location>
        <begin position="195"/>
        <end position="197"/>
    </location>
    <ligand>
        <name>substrate</name>
    </ligand>
</feature>
<feature type="binding site" evidence="1">
    <location>
        <position position="199"/>
    </location>
    <ligand>
        <name>FMN</name>
        <dbReference type="ChEBI" id="CHEBI:58210"/>
    </ligand>
</feature>
<gene>
    <name evidence="1" type="primary">pdxH</name>
    <name type="ordered locus">Sala_0654</name>
</gene>
<comment type="function">
    <text evidence="1">Catalyzes the oxidation of either pyridoxine 5'-phosphate (PNP) or pyridoxamine 5'-phosphate (PMP) into pyridoxal 5'-phosphate (PLP).</text>
</comment>
<comment type="catalytic activity">
    <reaction evidence="1">
        <text>pyridoxamine 5'-phosphate + O2 + H2O = pyridoxal 5'-phosphate + H2O2 + NH4(+)</text>
        <dbReference type="Rhea" id="RHEA:15817"/>
        <dbReference type="ChEBI" id="CHEBI:15377"/>
        <dbReference type="ChEBI" id="CHEBI:15379"/>
        <dbReference type="ChEBI" id="CHEBI:16240"/>
        <dbReference type="ChEBI" id="CHEBI:28938"/>
        <dbReference type="ChEBI" id="CHEBI:58451"/>
        <dbReference type="ChEBI" id="CHEBI:597326"/>
        <dbReference type="EC" id="1.4.3.5"/>
    </reaction>
</comment>
<comment type="catalytic activity">
    <reaction evidence="1">
        <text>pyridoxine 5'-phosphate + O2 = pyridoxal 5'-phosphate + H2O2</text>
        <dbReference type="Rhea" id="RHEA:15149"/>
        <dbReference type="ChEBI" id="CHEBI:15379"/>
        <dbReference type="ChEBI" id="CHEBI:16240"/>
        <dbReference type="ChEBI" id="CHEBI:58589"/>
        <dbReference type="ChEBI" id="CHEBI:597326"/>
        <dbReference type="EC" id="1.4.3.5"/>
    </reaction>
</comment>
<comment type="cofactor">
    <cofactor evidence="1">
        <name>FMN</name>
        <dbReference type="ChEBI" id="CHEBI:58210"/>
    </cofactor>
    <text evidence="1">Binds 1 FMN per subunit.</text>
</comment>
<comment type="pathway">
    <text evidence="1">Cofactor metabolism; pyridoxal 5'-phosphate salvage; pyridoxal 5'-phosphate from pyridoxamine 5'-phosphate: step 1/1.</text>
</comment>
<comment type="pathway">
    <text evidence="1">Cofactor metabolism; pyridoxal 5'-phosphate salvage; pyridoxal 5'-phosphate from pyridoxine 5'-phosphate: step 1/1.</text>
</comment>
<comment type="subunit">
    <text evidence="1">Homodimer.</text>
</comment>
<comment type="similarity">
    <text evidence="1">Belongs to the pyridoxamine 5'-phosphate oxidase family.</text>
</comment>
<reference key="1">
    <citation type="journal article" date="2009" name="Proc. Natl. Acad. Sci. U.S.A.">
        <title>The genomic basis of trophic strategy in marine bacteria.</title>
        <authorList>
            <person name="Lauro F.M."/>
            <person name="McDougald D."/>
            <person name="Thomas T."/>
            <person name="Williams T.J."/>
            <person name="Egan S."/>
            <person name="Rice S."/>
            <person name="DeMaere M.Z."/>
            <person name="Ting L."/>
            <person name="Ertan H."/>
            <person name="Johnson J."/>
            <person name="Ferriera S."/>
            <person name="Lapidus A."/>
            <person name="Anderson I."/>
            <person name="Kyrpides N."/>
            <person name="Munk A.C."/>
            <person name="Detter C."/>
            <person name="Han C.S."/>
            <person name="Brown M.V."/>
            <person name="Robb F.T."/>
            <person name="Kjelleberg S."/>
            <person name="Cavicchioli R."/>
        </authorList>
    </citation>
    <scope>NUCLEOTIDE SEQUENCE [LARGE SCALE GENOMIC DNA]</scope>
    <source>
        <strain>DSM 13593 / LMG 18877 / RB2256</strain>
    </source>
</reference>
<name>PDXH_SPHAL</name>
<protein>
    <recommendedName>
        <fullName evidence="1">Pyridoxine/pyridoxamine 5'-phosphate oxidase</fullName>
        <ecNumber evidence="1">1.4.3.5</ecNumber>
    </recommendedName>
    <alternativeName>
        <fullName evidence="1">PNP/PMP oxidase</fullName>
        <shortName evidence="1">PNPOx</shortName>
    </alternativeName>
    <alternativeName>
        <fullName evidence="1">Pyridoxal 5'-phosphate synthase</fullName>
    </alternativeName>
</protein>
<keyword id="KW-0285">Flavoprotein</keyword>
<keyword id="KW-0288">FMN</keyword>
<keyword id="KW-0560">Oxidoreductase</keyword>
<keyword id="KW-0664">Pyridoxine biosynthesis</keyword>
<keyword id="KW-1185">Reference proteome</keyword>
<organism>
    <name type="scientific">Sphingopyxis alaskensis (strain DSM 13593 / LMG 18877 / RB2256)</name>
    <name type="common">Sphingomonas alaskensis</name>
    <dbReference type="NCBI Taxonomy" id="317655"/>
    <lineage>
        <taxon>Bacteria</taxon>
        <taxon>Pseudomonadati</taxon>
        <taxon>Pseudomonadota</taxon>
        <taxon>Alphaproteobacteria</taxon>
        <taxon>Sphingomonadales</taxon>
        <taxon>Sphingomonadaceae</taxon>
        <taxon>Sphingopyxis</taxon>
    </lineage>
</organism>
<proteinExistence type="inferred from homology"/>